<accession>Q1WS98</accession>
<proteinExistence type="inferred from homology"/>
<dbReference type="EMBL" id="CP000233">
    <property type="protein sequence ID" value="ABE00231.1"/>
    <property type="molecule type" value="Genomic_DNA"/>
</dbReference>
<dbReference type="RefSeq" id="WP_003701313.1">
    <property type="nucleotide sequence ID" value="NC_007929.1"/>
</dbReference>
<dbReference type="RefSeq" id="YP_536314.1">
    <property type="nucleotide sequence ID" value="NC_007929.1"/>
</dbReference>
<dbReference type="SMR" id="Q1WS98"/>
<dbReference type="STRING" id="362948.LSL_1427"/>
<dbReference type="GeneID" id="89466162"/>
<dbReference type="KEGG" id="lsl:LSL_1427"/>
<dbReference type="PATRIC" id="fig|362948.14.peg.1510"/>
<dbReference type="HOGENOM" id="CLU_158491_5_2_9"/>
<dbReference type="OrthoDB" id="9815192at2"/>
<dbReference type="Proteomes" id="UP000006559">
    <property type="component" value="Chromosome"/>
</dbReference>
<dbReference type="GO" id="GO:0022625">
    <property type="term" value="C:cytosolic large ribosomal subunit"/>
    <property type="evidence" value="ECO:0007669"/>
    <property type="project" value="TreeGrafter"/>
</dbReference>
<dbReference type="GO" id="GO:0003735">
    <property type="term" value="F:structural constituent of ribosome"/>
    <property type="evidence" value="ECO:0007669"/>
    <property type="project" value="InterPro"/>
</dbReference>
<dbReference type="GO" id="GO:0006412">
    <property type="term" value="P:translation"/>
    <property type="evidence" value="ECO:0007669"/>
    <property type="project" value="UniProtKB-UniRule"/>
</dbReference>
<dbReference type="CDD" id="cd00427">
    <property type="entry name" value="Ribosomal_L29_HIP"/>
    <property type="match status" value="1"/>
</dbReference>
<dbReference type="FunFam" id="1.10.287.310:FF:000001">
    <property type="entry name" value="50S ribosomal protein L29"/>
    <property type="match status" value="1"/>
</dbReference>
<dbReference type="Gene3D" id="1.10.287.310">
    <property type="match status" value="1"/>
</dbReference>
<dbReference type="HAMAP" id="MF_00374">
    <property type="entry name" value="Ribosomal_uL29"/>
    <property type="match status" value="1"/>
</dbReference>
<dbReference type="InterPro" id="IPR050063">
    <property type="entry name" value="Ribosomal_protein_uL29"/>
</dbReference>
<dbReference type="InterPro" id="IPR001854">
    <property type="entry name" value="Ribosomal_uL29"/>
</dbReference>
<dbReference type="InterPro" id="IPR018254">
    <property type="entry name" value="Ribosomal_uL29_CS"/>
</dbReference>
<dbReference type="InterPro" id="IPR036049">
    <property type="entry name" value="Ribosomal_uL29_sf"/>
</dbReference>
<dbReference type="NCBIfam" id="TIGR00012">
    <property type="entry name" value="L29"/>
    <property type="match status" value="1"/>
</dbReference>
<dbReference type="PANTHER" id="PTHR10916">
    <property type="entry name" value="60S RIBOSOMAL PROTEIN L35/50S RIBOSOMAL PROTEIN L29"/>
    <property type="match status" value="1"/>
</dbReference>
<dbReference type="PANTHER" id="PTHR10916:SF0">
    <property type="entry name" value="LARGE RIBOSOMAL SUBUNIT PROTEIN UL29C"/>
    <property type="match status" value="1"/>
</dbReference>
<dbReference type="Pfam" id="PF00831">
    <property type="entry name" value="Ribosomal_L29"/>
    <property type="match status" value="1"/>
</dbReference>
<dbReference type="SUPFAM" id="SSF46561">
    <property type="entry name" value="Ribosomal protein L29 (L29p)"/>
    <property type="match status" value="1"/>
</dbReference>
<dbReference type="PROSITE" id="PS00579">
    <property type="entry name" value="RIBOSOMAL_L29"/>
    <property type="match status" value="1"/>
</dbReference>
<comment type="similarity">
    <text evidence="1">Belongs to the universal ribosomal protein uL29 family.</text>
</comment>
<evidence type="ECO:0000255" key="1">
    <source>
        <dbReference type="HAMAP-Rule" id="MF_00374"/>
    </source>
</evidence>
<evidence type="ECO:0000305" key="2"/>
<name>RL29_LIGS1</name>
<gene>
    <name evidence="1" type="primary">rpmC</name>
    <name type="ordered locus">LSL_1427</name>
</gene>
<organism>
    <name type="scientific">Ligilactobacillus salivarius (strain UCC118)</name>
    <name type="common">Lactobacillus salivarius</name>
    <dbReference type="NCBI Taxonomy" id="362948"/>
    <lineage>
        <taxon>Bacteria</taxon>
        <taxon>Bacillati</taxon>
        <taxon>Bacillota</taxon>
        <taxon>Bacilli</taxon>
        <taxon>Lactobacillales</taxon>
        <taxon>Lactobacillaceae</taxon>
        <taxon>Ligilactobacillus</taxon>
    </lineage>
</organism>
<protein>
    <recommendedName>
        <fullName evidence="1">Large ribosomal subunit protein uL29</fullName>
    </recommendedName>
    <alternativeName>
        <fullName evidence="2">50S ribosomal protein L29</fullName>
    </alternativeName>
</protein>
<reference key="1">
    <citation type="journal article" date="2006" name="Proc. Natl. Acad. Sci. U.S.A.">
        <title>Multireplicon genome architecture of Lactobacillus salivarius.</title>
        <authorList>
            <person name="Claesson M.J."/>
            <person name="Li Y."/>
            <person name="Leahy S."/>
            <person name="Canchaya C."/>
            <person name="van Pijkeren J.P."/>
            <person name="Cerdeno-Tarraga A.M."/>
            <person name="Parkhill J."/>
            <person name="Flynn S."/>
            <person name="O'Sullivan G.C."/>
            <person name="Collins J.K."/>
            <person name="Higgins D."/>
            <person name="Shanahan F."/>
            <person name="Fitzgerald G.F."/>
            <person name="van Sinderen D."/>
            <person name="O'Toole P.W."/>
        </authorList>
    </citation>
    <scope>NUCLEOTIDE SEQUENCE [LARGE SCALE GENOMIC DNA]</scope>
    <source>
        <strain>UCC118</strain>
    </source>
</reference>
<sequence>MKAKEINELTTAEMLEKEKQFKEELFNLRFQLATGQLENTARLKEVRKNIARIKTALRQQELNK</sequence>
<keyword id="KW-1185">Reference proteome</keyword>
<keyword id="KW-0687">Ribonucleoprotein</keyword>
<keyword id="KW-0689">Ribosomal protein</keyword>
<feature type="chain" id="PRO_1000007509" description="Large ribosomal subunit protein uL29">
    <location>
        <begin position="1"/>
        <end position="64"/>
    </location>
</feature>